<sequence>MFLLQKYDYFFVFLLIISFFSILIFSLSKWIAPINKGPEKFTSYESGIEPMGEACIQFQIRYYMFALVFVIFDVETVFLYPWAMSFYNFGISSFIEALIFILILIIGLVYAWRKGALEWS</sequence>
<evidence type="ECO:0000255" key="1">
    <source>
        <dbReference type="HAMAP-Rule" id="MF_01394"/>
    </source>
</evidence>
<dbReference type="EC" id="7.1.1.-" evidence="1"/>
<dbReference type="EMBL" id="X04465">
    <property type="protein sequence ID" value="CAA28089.1"/>
    <property type="molecule type" value="Genomic_DNA"/>
</dbReference>
<dbReference type="PIR" id="A00427">
    <property type="entry name" value="DELVN3"/>
</dbReference>
<dbReference type="RefSeq" id="NP_039303.1">
    <property type="nucleotide sequence ID" value="NC_001319.1"/>
</dbReference>
<dbReference type="SMR" id="P06259"/>
<dbReference type="GeneID" id="2702551"/>
<dbReference type="GO" id="GO:0009535">
    <property type="term" value="C:chloroplast thylakoid membrane"/>
    <property type="evidence" value="ECO:0007669"/>
    <property type="project" value="UniProtKB-SubCell"/>
</dbReference>
<dbReference type="GO" id="GO:0008137">
    <property type="term" value="F:NADH dehydrogenase (ubiquinone) activity"/>
    <property type="evidence" value="ECO:0007669"/>
    <property type="project" value="InterPro"/>
</dbReference>
<dbReference type="GO" id="GO:0048038">
    <property type="term" value="F:quinone binding"/>
    <property type="evidence" value="ECO:0007669"/>
    <property type="project" value="UniProtKB-KW"/>
</dbReference>
<dbReference type="GO" id="GO:0019684">
    <property type="term" value="P:photosynthesis, light reaction"/>
    <property type="evidence" value="ECO:0007669"/>
    <property type="project" value="UniProtKB-UniRule"/>
</dbReference>
<dbReference type="FunFam" id="1.20.58.1610:FF:000001">
    <property type="entry name" value="NAD(P)H-quinone oxidoreductase subunit 3, chloroplastic"/>
    <property type="match status" value="1"/>
</dbReference>
<dbReference type="Gene3D" id="1.20.58.1610">
    <property type="entry name" value="NADH:ubiquinone/plastoquinone oxidoreductase, chain 3"/>
    <property type="match status" value="1"/>
</dbReference>
<dbReference type="HAMAP" id="MF_01394">
    <property type="entry name" value="NDH1_NuoA"/>
    <property type="match status" value="1"/>
</dbReference>
<dbReference type="InterPro" id="IPR023043">
    <property type="entry name" value="NAD(P)H_OxRDtase_bac/plastid"/>
</dbReference>
<dbReference type="InterPro" id="IPR000440">
    <property type="entry name" value="NADH_UbQ/plastoQ_OxRdtase_su3"/>
</dbReference>
<dbReference type="InterPro" id="IPR038430">
    <property type="entry name" value="NDAH_ubi_oxred_su3_sf"/>
</dbReference>
<dbReference type="PANTHER" id="PTHR11058">
    <property type="entry name" value="NADH-UBIQUINONE OXIDOREDUCTASE CHAIN 3"/>
    <property type="match status" value="1"/>
</dbReference>
<dbReference type="PANTHER" id="PTHR11058:SF9">
    <property type="entry name" value="NADH-UBIQUINONE OXIDOREDUCTASE CHAIN 3"/>
    <property type="match status" value="1"/>
</dbReference>
<dbReference type="Pfam" id="PF00507">
    <property type="entry name" value="Oxidored_q4"/>
    <property type="match status" value="1"/>
</dbReference>
<keyword id="KW-0150">Chloroplast</keyword>
<keyword id="KW-0472">Membrane</keyword>
<keyword id="KW-0520">NAD</keyword>
<keyword id="KW-0521">NADP</keyword>
<keyword id="KW-0934">Plastid</keyword>
<keyword id="KW-0618">Plastoquinone</keyword>
<keyword id="KW-0874">Quinone</keyword>
<keyword id="KW-0793">Thylakoid</keyword>
<keyword id="KW-1278">Translocase</keyword>
<keyword id="KW-0812">Transmembrane</keyword>
<keyword id="KW-1133">Transmembrane helix</keyword>
<keyword id="KW-0813">Transport</keyword>
<feature type="chain" id="PRO_0000117848" description="NAD(P)H-quinone oxidoreductase subunit 3, chloroplastic">
    <location>
        <begin position="1"/>
        <end position="120"/>
    </location>
</feature>
<feature type="transmembrane region" description="Helical" evidence="1">
    <location>
        <begin position="7"/>
        <end position="27"/>
    </location>
</feature>
<feature type="transmembrane region" description="Helical" evidence="1">
    <location>
        <begin position="64"/>
        <end position="84"/>
    </location>
</feature>
<feature type="transmembrane region" description="Helical" evidence="1">
    <location>
        <begin position="89"/>
        <end position="109"/>
    </location>
</feature>
<gene>
    <name evidence="1" type="primary">ndhC</name>
    <name type="synonym">ndh3</name>
</gene>
<organism>
    <name type="scientific">Marchantia polymorpha</name>
    <name type="common">Common liverwort</name>
    <name type="synonym">Marchantia aquatica</name>
    <dbReference type="NCBI Taxonomy" id="3197"/>
    <lineage>
        <taxon>Eukaryota</taxon>
        <taxon>Viridiplantae</taxon>
        <taxon>Streptophyta</taxon>
        <taxon>Embryophyta</taxon>
        <taxon>Marchantiophyta</taxon>
        <taxon>Marchantiopsida</taxon>
        <taxon>Marchantiidae</taxon>
        <taxon>Marchantiales</taxon>
        <taxon>Marchantiaceae</taxon>
        <taxon>Marchantia</taxon>
    </lineage>
</organism>
<proteinExistence type="inferred from homology"/>
<protein>
    <recommendedName>
        <fullName evidence="1">NAD(P)H-quinone oxidoreductase subunit 3, chloroplastic</fullName>
        <ecNumber evidence="1">7.1.1.-</ecNumber>
    </recommendedName>
    <alternativeName>
        <fullName evidence="1">NAD(P)H dehydrogenase subunit 3</fullName>
    </alternativeName>
    <alternativeName>
        <fullName evidence="1">NADH-plastoquinone oxidoreductase subunit 3</fullName>
    </alternativeName>
</protein>
<reference key="1">
    <citation type="journal article" date="1986" name="Nature">
        <title>Chloroplast gene organization deduced from complete sequence of liverwort Marchantia polymorpha chloroplast DNA.</title>
        <authorList>
            <person name="Ohyama K."/>
            <person name="Fukuzawa H."/>
            <person name="Kohchi T."/>
            <person name="Shirai H."/>
            <person name="Sano T."/>
            <person name="Sano S."/>
            <person name="Umesono K."/>
            <person name="Shiki Y."/>
            <person name="Takeuchi M."/>
            <person name="Chang Z."/>
            <person name="Aota S."/>
            <person name="Inokuchi H."/>
            <person name="Ozeki H."/>
        </authorList>
    </citation>
    <scope>NUCLEOTIDE SEQUENCE [LARGE SCALE GENOMIC DNA]</scope>
</reference>
<reference key="2">
    <citation type="journal article" date="1988" name="J. Mol. Biol.">
        <title>Structure and organization of Marchantia polymorpha chloroplast genome. II. Gene organization of the large single copy region from rps'12 to atpB.</title>
        <authorList>
            <person name="Umesono K."/>
            <person name="Inokuchi H."/>
            <person name="Shiki Y."/>
            <person name="Takeuchi M."/>
            <person name="Chang Z."/>
            <person name="Fukuzawa H."/>
            <person name="Kohchi T."/>
            <person name="Shirai H."/>
            <person name="Ohyama K."/>
            <person name="Ozeki H."/>
        </authorList>
    </citation>
    <scope>NUCLEOTIDE SEQUENCE [GENOMIC DNA]</scope>
</reference>
<accession>P06259</accession>
<name>NU3C_MARPO</name>
<comment type="function">
    <text evidence="1">NDH shuttles electrons from NAD(P)H:plastoquinone, via FMN and iron-sulfur (Fe-S) centers, to quinones in the photosynthetic chain and possibly in a chloroplast respiratory chain. The immediate electron acceptor for the enzyme in this species is believed to be plastoquinone. Couples the redox reaction to proton translocation, and thus conserves the redox energy in a proton gradient.</text>
</comment>
<comment type="catalytic activity">
    <reaction evidence="1">
        <text>a plastoquinone + NADH + (n+1) H(+)(in) = a plastoquinol + NAD(+) + n H(+)(out)</text>
        <dbReference type="Rhea" id="RHEA:42608"/>
        <dbReference type="Rhea" id="RHEA-COMP:9561"/>
        <dbReference type="Rhea" id="RHEA-COMP:9562"/>
        <dbReference type="ChEBI" id="CHEBI:15378"/>
        <dbReference type="ChEBI" id="CHEBI:17757"/>
        <dbReference type="ChEBI" id="CHEBI:57540"/>
        <dbReference type="ChEBI" id="CHEBI:57945"/>
        <dbReference type="ChEBI" id="CHEBI:62192"/>
    </reaction>
</comment>
<comment type="catalytic activity">
    <reaction evidence="1">
        <text>a plastoquinone + NADPH + (n+1) H(+)(in) = a plastoquinol + NADP(+) + n H(+)(out)</text>
        <dbReference type="Rhea" id="RHEA:42612"/>
        <dbReference type="Rhea" id="RHEA-COMP:9561"/>
        <dbReference type="Rhea" id="RHEA-COMP:9562"/>
        <dbReference type="ChEBI" id="CHEBI:15378"/>
        <dbReference type="ChEBI" id="CHEBI:17757"/>
        <dbReference type="ChEBI" id="CHEBI:57783"/>
        <dbReference type="ChEBI" id="CHEBI:58349"/>
        <dbReference type="ChEBI" id="CHEBI:62192"/>
    </reaction>
</comment>
<comment type="subunit">
    <text evidence="1">NDH is composed of at least 16 different subunits, 5 of which are encoded in the nucleus.</text>
</comment>
<comment type="subcellular location">
    <subcellularLocation>
        <location evidence="1">Plastid</location>
        <location evidence="1">Chloroplast thylakoid membrane</location>
        <topology evidence="1">Multi-pass membrane protein</topology>
    </subcellularLocation>
</comment>
<comment type="similarity">
    <text evidence="1">Belongs to the complex I subunit 3 family.</text>
</comment>
<geneLocation type="chloroplast"/>